<accession>P56082</accession>
<comment type="function">
    <text evidence="1">Produces ATP from ADP in the presence of a proton gradient across the membrane. The gamma chain is believed to be important in regulating ATPase activity and the flow of protons through the CF(0) complex.</text>
</comment>
<comment type="subunit">
    <text evidence="1">F-type ATPases have 2 components, CF(1) - the catalytic core - and CF(0) - the membrane proton channel. CF(1) has five subunits: alpha(3), beta(3), gamma(1), delta(1), epsilon(1). CF(0) has three main subunits: a, b and c.</text>
</comment>
<comment type="subcellular location">
    <subcellularLocation>
        <location evidence="1">Cell inner membrane</location>
        <topology evidence="1">Peripheral membrane protein</topology>
    </subcellularLocation>
</comment>
<comment type="similarity">
    <text evidence="1">Belongs to the ATPase gamma chain family.</text>
</comment>
<name>ATPG_HELPY</name>
<protein>
    <recommendedName>
        <fullName evidence="1">ATP synthase gamma chain</fullName>
    </recommendedName>
    <alternativeName>
        <fullName evidence="1">ATP synthase F1 sector gamma subunit</fullName>
    </alternativeName>
    <alternativeName>
        <fullName evidence="1">F-ATPase gamma subunit</fullName>
    </alternativeName>
</protein>
<feature type="chain" id="PRO_0000073295" description="ATP synthase gamma chain">
    <location>
        <begin position="1"/>
        <end position="301"/>
    </location>
</feature>
<dbReference type="EMBL" id="AE000511">
    <property type="protein sequence ID" value="AAD08175.1"/>
    <property type="molecule type" value="Genomic_DNA"/>
</dbReference>
<dbReference type="PIR" id="E64661">
    <property type="entry name" value="E64661"/>
</dbReference>
<dbReference type="RefSeq" id="NP_207924.1">
    <property type="nucleotide sequence ID" value="NC_000915.1"/>
</dbReference>
<dbReference type="RefSeq" id="WP_000002194.1">
    <property type="nucleotide sequence ID" value="NC_018939.1"/>
</dbReference>
<dbReference type="SMR" id="P56082"/>
<dbReference type="DIP" id="DIP-3116N"/>
<dbReference type="FunCoup" id="P56082">
    <property type="interactions" value="275"/>
</dbReference>
<dbReference type="IntAct" id="P56082">
    <property type="interactions" value="3"/>
</dbReference>
<dbReference type="MINT" id="P56082"/>
<dbReference type="STRING" id="85962.HP_1133"/>
<dbReference type="PaxDb" id="85962-C694_05845"/>
<dbReference type="EnsemblBacteria" id="AAD08175">
    <property type="protein sequence ID" value="AAD08175"/>
    <property type="gene ID" value="HP_1133"/>
</dbReference>
<dbReference type="KEGG" id="heo:C694_05845"/>
<dbReference type="KEGG" id="hpy:HP_1133"/>
<dbReference type="PATRIC" id="fig|85962.47.peg.1215"/>
<dbReference type="eggNOG" id="COG0224">
    <property type="taxonomic scope" value="Bacteria"/>
</dbReference>
<dbReference type="InParanoid" id="P56082"/>
<dbReference type="OrthoDB" id="9812769at2"/>
<dbReference type="PhylomeDB" id="P56082"/>
<dbReference type="Proteomes" id="UP000000429">
    <property type="component" value="Chromosome"/>
</dbReference>
<dbReference type="GO" id="GO:0005886">
    <property type="term" value="C:plasma membrane"/>
    <property type="evidence" value="ECO:0007669"/>
    <property type="project" value="UniProtKB-SubCell"/>
</dbReference>
<dbReference type="GO" id="GO:0045259">
    <property type="term" value="C:proton-transporting ATP synthase complex"/>
    <property type="evidence" value="ECO:0007669"/>
    <property type="project" value="UniProtKB-KW"/>
</dbReference>
<dbReference type="GO" id="GO:0005524">
    <property type="term" value="F:ATP binding"/>
    <property type="evidence" value="ECO:0007669"/>
    <property type="project" value="UniProtKB-UniRule"/>
</dbReference>
<dbReference type="GO" id="GO:0046933">
    <property type="term" value="F:proton-transporting ATP synthase activity, rotational mechanism"/>
    <property type="evidence" value="ECO:0007669"/>
    <property type="project" value="UniProtKB-UniRule"/>
</dbReference>
<dbReference type="GO" id="GO:0015986">
    <property type="term" value="P:proton motive force-driven ATP synthesis"/>
    <property type="evidence" value="ECO:0000318"/>
    <property type="project" value="GO_Central"/>
</dbReference>
<dbReference type="GO" id="GO:0042777">
    <property type="term" value="P:proton motive force-driven plasma membrane ATP synthesis"/>
    <property type="evidence" value="ECO:0007669"/>
    <property type="project" value="UniProtKB-UniRule"/>
</dbReference>
<dbReference type="CDD" id="cd12151">
    <property type="entry name" value="F1-ATPase_gamma"/>
    <property type="match status" value="1"/>
</dbReference>
<dbReference type="FunFam" id="1.10.287.80:FF:000007">
    <property type="entry name" value="ATP synthase gamma chain"/>
    <property type="match status" value="1"/>
</dbReference>
<dbReference type="FunFam" id="3.40.1380.10:FF:000006">
    <property type="entry name" value="ATP synthase gamma chain"/>
    <property type="match status" value="1"/>
</dbReference>
<dbReference type="Gene3D" id="3.40.1380.10">
    <property type="match status" value="1"/>
</dbReference>
<dbReference type="Gene3D" id="1.10.287.80">
    <property type="entry name" value="ATP synthase, gamma subunit, helix hairpin domain"/>
    <property type="match status" value="2"/>
</dbReference>
<dbReference type="HAMAP" id="MF_00815">
    <property type="entry name" value="ATP_synth_gamma_bact"/>
    <property type="match status" value="1"/>
</dbReference>
<dbReference type="InterPro" id="IPR035968">
    <property type="entry name" value="ATP_synth_F1_ATPase_gsu"/>
</dbReference>
<dbReference type="InterPro" id="IPR000131">
    <property type="entry name" value="ATP_synth_F1_gsu"/>
</dbReference>
<dbReference type="NCBIfam" id="TIGR01146">
    <property type="entry name" value="ATPsyn_F1gamma"/>
    <property type="match status" value="1"/>
</dbReference>
<dbReference type="PANTHER" id="PTHR11693">
    <property type="entry name" value="ATP SYNTHASE GAMMA CHAIN"/>
    <property type="match status" value="1"/>
</dbReference>
<dbReference type="PANTHER" id="PTHR11693:SF22">
    <property type="entry name" value="ATP SYNTHASE SUBUNIT GAMMA, MITOCHONDRIAL"/>
    <property type="match status" value="1"/>
</dbReference>
<dbReference type="Pfam" id="PF00231">
    <property type="entry name" value="ATP-synt"/>
    <property type="match status" value="1"/>
</dbReference>
<dbReference type="PRINTS" id="PR00126">
    <property type="entry name" value="ATPASEGAMMA"/>
</dbReference>
<dbReference type="SUPFAM" id="SSF52943">
    <property type="entry name" value="ATP synthase (F1-ATPase), gamma subunit"/>
    <property type="match status" value="1"/>
</dbReference>
<reference key="1">
    <citation type="journal article" date="1997" name="Nature">
        <title>The complete genome sequence of the gastric pathogen Helicobacter pylori.</title>
        <authorList>
            <person name="Tomb J.-F."/>
            <person name="White O."/>
            <person name="Kerlavage A.R."/>
            <person name="Clayton R.A."/>
            <person name="Sutton G.G."/>
            <person name="Fleischmann R.D."/>
            <person name="Ketchum K.A."/>
            <person name="Klenk H.-P."/>
            <person name="Gill S.R."/>
            <person name="Dougherty B.A."/>
            <person name="Nelson K.E."/>
            <person name="Quackenbush J."/>
            <person name="Zhou L."/>
            <person name="Kirkness E.F."/>
            <person name="Peterson S.N."/>
            <person name="Loftus B.J."/>
            <person name="Richardson D.L."/>
            <person name="Dodson R.J."/>
            <person name="Khalak H.G."/>
            <person name="Glodek A."/>
            <person name="McKenney K."/>
            <person name="FitzGerald L.M."/>
            <person name="Lee N."/>
            <person name="Adams M.D."/>
            <person name="Hickey E.K."/>
            <person name="Berg D.E."/>
            <person name="Gocayne J.D."/>
            <person name="Utterback T.R."/>
            <person name="Peterson J.D."/>
            <person name="Kelley J.M."/>
            <person name="Cotton M.D."/>
            <person name="Weidman J.F."/>
            <person name="Fujii C."/>
            <person name="Bowman C."/>
            <person name="Watthey L."/>
            <person name="Wallin E."/>
            <person name="Hayes W.S."/>
            <person name="Borodovsky M."/>
            <person name="Karp P.D."/>
            <person name="Smith H.O."/>
            <person name="Fraser C.M."/>
            <person name="Venter J.C."/>
        </authorList>
    </citation>
    <scope>NUCLEOTIDE SEQUENCE [LARGE SCALE GENOMIC DNA]</scope>
    <source>
        <strain>ATCC 700392 / 26695</strain>
    </source>
</reference>
<gene>
    <name evidence="1" type="primary">atpG</name>
    <name type="ordered locus">HP_1133</name>
</gene>
<keyword id="KW-0066">ATP synthesis</keyword>
<keyword id="KW-0997">Cell inner membrane</keyword>
<keyword id="KW-1003">Cell membrane</keyword>
<keyword id="KW-0139">CF(1)</keyword>
<keyword id="KW-0375">Hydrogen ion transport</keyword>
<keyword id="KW-0406">Ion transport</keyword>
<keyword id="KW-0472">Membrane</keyword>
<keyword id="KW-1185">Reference proteome</keyword>
<keyword id="KW-0813">Transport</keyword>
<evidence type="ECO:0000255" key="1">
    <source>
        <dbReference type="HAMAP-Rule" id="MF_00815"/>
    </source>
</evidence>
<organism>
    <name type="scientific">Helicobacter pylori (strain ATCC 700392 / 26695)</name>
    <name type="common">Campylobacter pylori</name>
    <dbReference type="NCBI Taxonomy" id="85962"/>
    <lineage>
        <taxon>Bacteria</taxon>
        <taxon>Pseudomonadati</taxon>
        <taxon>Campylobacterota</taxon>
        <taxon>Epsilonproteobacteria</taxon>
        <taxon>Campylobacterales</taxon>
        <taxon>Helicobacteraceae</taxon>
        <taxon>Helicobacter</taxon>
    </lineage>
</organism>
<sequence>MANLRDIRKKIGSVKNTQKITHAMKLVSTSKLRKAEEVARNSRAYALKLDAVFDDVLSKMKNQGIEDIQSKYFRELERLEIKKVDIIFITADKGLCGGFNTNTIKKVLACTNEYKEKDIKVRLRGIGKKGNEYFSFNGIEVLDKINNLSSMPNYERVQEFMKKVVEDYLSGKTDKVIIIHNGFKNMITQEIRVKTILPIGYKIIHQNPQPSETQETITSEPSGSEDEILDSLAEKYVEYSLYYALIDSLAAEHSARMQAMDTATNNAKDLVKTLTISYNKARQEAITTELVEINAGVEALK</sequence>
<proteinExistence type="inferred from homology"/>